<proteinExistence type="inferred from homology"/>
<keyword id="KW-1185">Reference proteome</keyword>
<dbReference type="EMBL" id="AC133919">
    <property type="status" value="NOT_ANNOTATED_CDS"/>
    <property type="molecule type" value="Genomic_DNA"/>
</dbReference>
<dbReference type="iPTMnet" id="P0CG43"/>
<dbReference type="PhosphoSitePlus" id="P0CG43"/>
<dbReference type="BioMuta" id="HGNC:34081"/>
<dbReference type="DMDM" id="300680943"/>
<dbReference type="MassIVE" id="P0CG43"/>
<dbReference type="PeptideAtlas" id="P0CG43"/>
<dbReference type="AGR" id="HGNC:34081"/>
<dbReference type="GeneCards" id="FAM157C"/>
<dbReference type="HGNC" id="HGNC:34081">
    <property type="gene designation" value="FAM157C"/>
</dbReference>
<dbReference type="neXtProt" id="NX_P0CG43"/>
<dbReference type="PharmGKB" id="PA164719726"/>
<dbReference type="InParanoid" id="P0CG43"/>
<dbReference type="PAN-GO" id="P0CG43">
    <property type="GO annotations" value="0 GO annotations based on evolutionary models"/>
</dbReference>
<dbReference type="PhylomeDB" id="P0CG43"/>
<dbReference type="Pharos" id="P0CG43">
    <property type="development level" value="Tdark"/>
</dbReference>
<dbReference type="PRO" id="PR:P0CG43"/>
<dbReference type="Proteomes" id="UP000005640">
    <property type="component" value="Unplaced"/>
</dbReference>
<dbReference type="RNAct" id="P0CG43">
    <property type="molecule type" value="protein"/>
</dbReference>
<reference key="1">
    <citation type="journal article" date="2004" name="Nature">
        <title>The sequence and analysis of duplication-rich human chromosome 16.</title>
        <authorList>
            <person name="Martin J."/>
            <person name="Han C."/>
            <person name="Gordon L.A."/>
            <person name="Terry A."/>
            <person name="Prabhakar S."/>
            <person name="She X."/>
            <person name="Xie G."/>
            <person name="Hellsten U."/>
            <person name="Chan Y.M."/>
            <person name="Altherr M."/>
            <person name="Couronne O."/>
            <person name="Aerts A."/>
            <person name="Bajorek E."/>
            <person name="Black S."/>
            <person name="Blumer H."/>
            <person name="Branscomb E."/>
            <person name="Brown N.C."/>
            <person name="Bruno W.J."/>
            <person name="Buckingham J.M."/>
            <person name="Callen D.F."/>
            <person name="Campbell C.S."/>
            <person name="Campbell M.L."/>
            <person name="Campbell E.W."/>
            <person name="Caoile C."/>
            <person name="Challacombe J.F."/>
            <person name="Chasteen L.A."/>
            <person name="Chertkov O."/>
            <person name="Chi H.C."/>
            <person name="Christensen M."/>
            <person name="Clark L.M."/>
            <person name="Cohn J.D."/>
            <person name="Denys M."/>
            <person name="Detter J.C."/>
            <person name="Dickson M."/>
            <person name="Dimitrijevic-Bussod M."/>
            <person name="Escobar J."/>
            <person name="Fawcett J.J."/>
            <person name="Flowers D."/>
            <person name="Fotopulos D."/>
            <person name="Glavina T."/>
            <person name="Gomez M."/>
            <person name="Gonzales E."/>
            <person name="Goodstein D."/>
            <person name="Goodwin L.A."/>
            <person name="Grady D.L."/>
            <person name="Grigoriev I."/>
            <person name="Groza M."/>
            <person name="Hammon N."/>
            <person name="Hawkins T."/>
            <person name="Haydu L."/>
            <person name="Hildebrand C.E."/>
            <person name="Huang W."/>
            <person name="Israni S."/>
            <person name="Jett J."/>
            <person name="Jewett P.B."/>
            <person name="Kadner K."/>
            <person name="Kimball H."/>
            <person name="Kobayashi A."/>
            <person name="Krawczyk M.-C."/>
            <person name="Leyba T."/>
            <person name="Longmire J.L."/>
            <person name="Lopez F."/>
            <person name="Lou Y."/>
            <person name="Lowry S."/>
            <person name="Ludeman T."/>
            <person name="Manohar C.F."/>
            <person name="Mark G.A."/>
            <person name="McMurray K.L."/>
            <person name="Meincke L.J."/>
            <person name="Morgan J."/>
            <person name="Moyzis R.K."/>
            <person name="Mundt M.O."/>
            <person name="Munk A.C."/>
            <person name="Nandkeshwar R.D."/>
            <person name="Pitluck S."/>
            <person name="Pollard M."/>
            <person name="Predki P."/>
            <person name="Parson-Quintana B."/>
            <person name="Ramirez L."/>
            <person name="Rash S."/>
            <person name="Retterer J."/>
            <person name="Ricke D.O."/>
            <person name="Robinson D.L."/>
            <person name="Rodriguez A."/>
            <person name="Salamov A."/>
            <person name="Saunders E.H."/>
            <person name="Scott D."/>
            <person name="Shough T."/>
            <person name="Stallings R.L."/>
            <person name="Stalvey M."/>
            <person name="Sutherland R.D."/>
            <person name="Tapia R."/>
            <person name="Tesmer J.G."/>
            <person name="Thayer N."/>
            <person name="Thompson L.S."/>
            <person name="Tice H."/>
            <person name="Torney D.C."/>
            <person name="Tran-Gyamfi M."/>
            <person name="Tsai M."/>
            <person name="Ulanovsky L.E."/>
            <person name="Ustaszewska A."/>
            <person name="Vo N."/>
            <person name="White P.S."/>
            <person name="Williams A.L."/>
            <person name="Wills P.L."/>
            <person name="Wu J.-R."/>
            <person name="Wu K."/>
            <person name="Yang J."/>
            <person name="DeJong P."/>
            <person name="Bruce D."/>
            <person name="Doggett N.A."/>
            <person name="Deaven L."/>
            <person name="Schmutz J."/>
            <person name="Grimwood J."/>
            <person name="Richardson P."/>
            <person name="Rokhsar D.S."/>
            <person name="Eichler E.E."/>
            <person name="Gilna P."/>
            <person name="Lucas S.M."/>
            <person name="Myers R.M."/>
            <person name="Rubin E.M."/>
            <person name="Pennacchio L.A."/>
        </authorList>
    </citation>
    <scope>NUCLEOTIDE SEQUENCE [LARGE SCALE GENOMIC DNA]</scope>
</reference>
<feature type="chain" id="PRO_0000395458" description="Putative protein FAM157C">
    <location>
        <begin position="1"/>
        <end position="387"/>
    </location>
</feature>
<feature type="region of interest" description="Disordered" evidence="1">
    <location>
        <begin position="1"/>
        <end position="21"/>
    </location>
</feature>
<feature type="region of interest" description="Disordered" evidence="1">
    <location>
        <begin position="182"/>
        <end position="226"/>
    </location>
</feature>
<feature type="region of interest" description="Disordered" evidence="1">
    <location>
        <begin position="329"/>
        <end position="353"/>
    </location>
</feature>
<sequence>MGPLFTTIPGAHSGPMRPLPKKHVEPMAVRQLLLGNATMIRHTCPMSVPLSRQVKEVAAQKPSEDIYKNWRRQQQQQQQQQQQQQQQQLDLLFHQRIQISLWPRKQKRRKTEQHSHSFVKKAFRFSASPGCGRPSSNKMLRSMGGGQRPTGLGSEFFRLLHDLHLLAFPTKCIWIHRRGEATARPRAPEHPAPPATAVRGRDAASQNLKRRPGSGTDGLRLQGAEPSRLLRTYAGGAVIPTGTPERAQPPPPQDLLGRRRWLSRNTWGPWPGTTQPPSPQLLRNDWGSCGFMVPEAARGKVFQDSQEGAHIRRETVSKSVCAEPWRHQRARDPAPTNFPLKCQKQRGASTSSGQHGGRVNLVFFIDSPTVIAVPDLQCPTKYSGILY</sequence>
<protein>
    <recommendedName>
        <fullName>Putative protein FAM157C</fullName>
    </recommendedName>
</protein>
<accession>P0CG43</accession>
<comment type="similarity">
    <text evidence="2">Belongs to the FAM157 family.</text>
</comment>
<gene>
    <name type="primary">FAM157C</name>
</gene>
<evidence type="ECO:0000256" key="1">
    <source>
        <dbReference type="SAM" id="MobiDB-lite"/>
    </source>
</evidence>
<evidence type="ECO:0000305" key="2"/>
<name>F157C_HUMAN</name>
<organism>
    <name type="scientific">Homo sapiens</name>
    <name type="common">Human</name>
    <dbReference type="NCBI Taxonomy" id="9606"/>
    <lineage>
        <taxon>Eukaryota</taxon>
        <taxon>Metazoa</taxon>
        <taxon>Chordata</taxon>
        <taxon>Craniata</taxon>
        <taxon>Vertebrata</taxon>
        <taxon>Euteleostomi</taxon>
        <taxon>Mammalia</taxon>
        <taxon>Eutheria</taxon>
        <taxon>Euarchontoglires</taxon>
        <taxon>Primates</taxon>
        <taxon>Haplorrhini</taxon>
        <taxon>Catarrhini</taxon>
        <taxon>Hominidae</taxon>
        <taxon>Homo</taxon>
    </lineage>
</organism>